<proteinExistence type="evidence at transcript level"/>
<sequence>MTGSSPPLSCQQVDNTLHIPALSCRGGFDFSLLFEELILGILPLGIVLIIAPFRLYHLFWRQAKVVASWLLWAKITAWLALGIVQLVLAVYWARPAATRTQASIAANAIITVGFFILCLLSCAEHLRSTTPSFLLNIYLLFTLLFDIAKTRTLWLRSSGQTDETIAILTSVTVGIKFLLLILEAVEKRHILRKGQSGYPPEATAGIFNRSFFLWLNPLFRSGFSKILDVEDLFDLDKHLSSRRLYSTLETLWDKVPKKNPNTLLFISLKAFKWPLLSAVPPRACLAALNFCQPLLLHRSLAFATEPVNNHTNSIGYGLIGAYILVYIGMGVTMGQYQHMTYRTITMVRGGVVSMIYNKASRLGIKDADPAASLTLMSADIERIVQGWQTIHDIWGNAAEIALAIYLLERELGVACVVPVGVALVALIGCLITLSFVVARQAVWLEAIERRISSTASMLSSMKGIKMLGLKSAIMKSLHGLRLEELEISKKFRRLLVWNMALGWTTRIFAPIFALGAFYGIMHSRGKDSAFDMSTAYTSLSLFALLADPLLSLVMALMTFVGSIGSFSRIQEFLEKDDHVDCRLKPLHASYESFEPKAMVLVDDSDATETASDRSIHRGKSVYHDALTVKNATFAWNVEKEPVLKGLTISIARGSFTMIVGPSGCGKSTLLKAILGEVPCVNGEIRLSSDSIAFCDQIPWHMNATIRESIVAMSSFDKEWYASVVHACGLVQDFEQLPRGDETVIGSKGIALSGGQSQRIALARAVYARKDIVILDDAFSGLDAATEDYVFHSLVGIHGLLRKINSTIIVASSSAKRLPYADQIVVLDKMGYASEQGSLKALNAAGGYVSSFGLGSPEWKSEIDKPSVTDLAQPKILRPNRTEAIKEDPRRQSGDLSIYLYYIRSIGWLPTRLVLTDMTGIWVKWWAISNEEDPNGRTGYYLGIYAMLGAVGMLSLIIGCWEMVINMVPKSGESFHRKLLATVLNAPMSFFAATDSGSILNRFSQDLQLIDMELPVAAINTFATLILCLAQMILMGIASRYAAISFPLVILAVYSIQKVYLRTSRQLRFLDLEAKAPLYSHFSDCLNGLVTLRAFGWQPALEDKNFQLLDYSQRPFYLLYAIQRWLTLTLDMVVAAIAVILIVLVVTLRGTISAGDVGVALLNVILFSQSIKLLVTFWTNLETHIGSIVRIRSFTETVSSENLPTEKDDVPPNWPWGGDIEFKSVSAEYRPSEPVLGDVSLTIKSGEKVGICGRTGSGKTSLIMSLFRMVELSSGSIHIDGVDITKIPRQEIRSRINGVSQSPLLIKGSIRRNMDPNGSYAEKAIIEAIKSVGLYTKIQEKGGLDTDISEVFLSQGQQQLFCLARAILRPGKVLVLDEATSNVDAKTDEIMQRVIREKFCTHTILAVAHKLETILDYDKVVVLDAGRVVESGDPCTLLSTEGSYFSRLYASSMALAEEQ</sequence>
<evidence type="ECO:0000255" key="1"/>
<evidence type="ECO:0000255" key="2">
    <source>
        <dbReference type="PROSITE-ProRule" id="PRU00434"/>
    </source>
</evidence>
<evidence type="ECO:0000255" key="3">
    <source>
        <dbReference type="PROSITE-ProRule" id="PRU00441"/>
    </source>
</evidence>
<evidence type="ECO:0000255" key="4">
    <source>
        <dbReference type="PROSITE-ProRule" id="PRU00498"/>
    </source>
</evidence>
<evidence type="ECO:0000269" key="5">
    <source>
    </source>
</evidence>
<evidence type="ECO:0000303" key="6">
    <source>
    </source>
</evidence>
<evidence type="ECO:0000305" key="7"/>
<evidence type="ECO:0000305" key="8">
    <source>
    </source>
</evidence>
<feature type="chain" id="PRO_0000445097" description="ABC multidrug transporter B">
    <location>
        <begin position="1"/>
        <end position="1458"/>
    </location>
</feature>
<feature type="transmembrane region" description="Helical" evidence="1">
    <location>
        <begin position="30"/>
        <end position="50"/>
    </location>
</feature>
<feature type="transmembrane region" description="Helical" evidence="1">
    <location>
        <begin position="70"/>
        <end position="90"/>
    </location>
</feature>
<feature type="transmembrane region" description="Helical" evidence="1">
    <location>
        <begin position="102"/>
        <end position="122"/>
    </location>
</feature>
<feature type="transmembrane region" description="Helical" evidence="1">
    <location>
        <begin position="128"/>
        <end position="148"/>
    </location>
</feature>
<feature type="transmembrane region" description="Helical" evidence="1">
    <location>
        <begin position="165"/>
        <end position="185"/>
    </location>
</feature>
<feature type="transmembrane region" description="Helical" evidence="1 3">
    <location>
        <begin position="273"/>
        <end position="295"/>
    </location>
</feature>
<feature type="transmembrane region" description="Helical" evidence="1 3">
    <location>
        <begin position="314"/>
        <end position="334"/>
    </location>
</feature>
<feature type="transmembrane region" description="Helical" evidence="1 3">
    <location>
        <begin position="387"/>
        <end position="407"/>
    </location>
</feature>
<feature type="transmembrane region" description="Helical" evidence="1 3">
    <location>
        <begin position="411"/>
        <end position="431"/>
    </location>
</feature>
<feature type="transmembrane region" description="Helical" evidence="1 3">
    <location>
        <begin position="501"/>
        <end position="521"/>
    </location>
</feature>
<feature type="transmembrane region" description="Helical" evidence="1 3">
    <location>
        <begin position="541"/>
        <end position="561"/>
    </location>
</feature>
<feature type="transmembrane region" description="Helical" evidence="1 3">
    <location>
        <begin position="940"/>
        <end position="960"/>
    </location>
</feature>
<feature type="transmembrane region" description="Helical" evidence="1 3">
    <location>
        <begin position="978"/>
        <end position="998"/>
    </location>
</feature>
<feature type="transmembrane region" description="Helical" evidence="1 3">
    <location>
        <begin position="1016"/>
        <end position="1036"/>
    </location>
</feature>
<feature type="transmembrane region" description="Helical" evidence="1 3">
    <location>
        <begin position="1040"/>
        <end position="1060"/>
    </location>
</feature>
<feature type="transmembrane region" description="Helical" evidence="1 3">
    <location>
        <begin position="1125"/>
        <end position="1145"/>
    </location>
</feature>
<feature type="transmembrane region" description="Helical" evidence="1 3">
    <location>
        <begin position="1156"/>
        <end position="1176"/>
    </location>
</feature>
<feature type="domain" description="ABC transmembrane type-1 1" evidence="3">
    <location>
        <begin position="283"/>
        <end position="561"/>
    </location>
</feature>
<feature type="domain" description="ABC transporter 1" evidence="2">
    <location>
        <begin position="626"/>
        <end position="853"/>
    </location>
</feature>
<feature type="domain" description="ABC transmembrane type-1 2" evidence="3">
    <location>
        <begin position="933"/>
        <end position="1182"/>
    </location>
</feature>
<feature type="domain" description="ABC transporter 2" evidence="2">
    <location>
        <begin position="1219"/>
        <end position="1449"/>
    </location>
</feature>
<feature type="binding site" evidence="2">
    <location>
        <begin position="660"/>
        <end position="667"/>
    </location>
    <ligand>
        <name>ATP</name>
        <dbReference type="ChEBI" id="CHEBI:30616"/>
    </ligand>
</feature>
<feature type="binding site" evidence="2">
    <location>
        <begin position="1252"/>
        <end position="1259"/>
    </location>
    <ligand>
        <name>ATP</name>
        <dbReference type="ChEBI" id="CHEBI:30616"/>
    </ligand>
</feature>
<feature type="glycosylation site" description="N-linked (GlcNAc...) asparagine" evidence="4">
    <location>
        <position position="208"/>
    </location>
</feature>
<feature type="glycosylation site" description="N-linked (GlcNAc...) asparagine" evidence="4">
    <location>
        <position position="309"/>
    </location>
</feature>
<feature type="glycosylation site" description="N-linked (GlcNAc...) asparagine" evidence="4">
    <location>
        <position position="630"/>
    </location>
</feature>
<feature type="glycosylation site" description="N-linked (GlcNAc...) asparagine" evidence="4">
    <location>
        <position position="702"/>
    </location>
</feature>
<feature type="glycosylation site" description="N-linked (GlcNAc...) asparagine" evidence="4">
    <location>
        <position position="804"/>
    </location>
</feature>
<feature type="glycosylation site" description="N-linked (GlcNAc...) asparagine" evidence="4">
    <location>
        <position position="879"/>
    </location>
</feature>
<feature type="glycosylation site" description="N-linked (GlcNAc...) asparagine" evidence="4">
    <location>
        <position position="1316"/>
    </location>
</feature>
<accession>Q4WT65</accession>
<organism>
    <name type="scientific">Aspergillus fumigatus (strain ATCC MYA-4609 / CBS 101355 / FGSC A1100 / Af293)</name>
    <name type="common">Neosartorya fumigata</name>
    <dbReference type="NCBI Taxonomy" id="330879"/>
    <lineage>
        <taxon>Eukaryota</taxon>
        <taxon>Fungi</taxon>
        <taxon>Dikarya</taxon>
        <taxon>Ascomycota</taxon>
        <taxon>Pezizomycotina</taxon>
        <taxon>Eurotiomycetes</taxon>
        <taxon>Eurotiomycetidae</taxon>
        <taxon>Eurotiales</taxon>
        <taxon>Aspergillaceae</taxon>
        <taxon>Aspergillus</taxon>
        <taxon>Aspergillus subgen. Fumigati</taxon>
    </lineage>
</organism>
<gene>
    <name evidence="6" type="primary">abcB</name>
    <name type="ORF">AFUA_1G10390</name>
</gene>
<keyword id="KW-0067">ATP-binding</keyword>
<keyword id="KW-1003">Cell membrane</keyword>
<keyword id="KW-0325">Glycoprotein</keyword>
<keyword id="KW-0472">Membrane</keyword>
<keyword id="KW-0547">Nucleotide-binding</keyword>
<keyword id="KW-1185">Reference proteome</keyword>
<keyword id="KW-0677">Repeat</keyword>
<keyword id="KW-0812">Transmembrane</keyword>
<keyword id="KW-1133">Transmembrane helix</keyword>
<keyword id="KW-0813">Transport</keyword>
<reference key="1">
    <citation type="journal article" date="2005" name="Nature">
        <title>Genomic sequence of the pathogenic and allergenic filamentous fungus Aspergillus fumigatus.</title>
        <authorList>
            <person name="Nierman W.C."/>
            <person name="Pain A."/>
            <person name="Anderson M.J."/>
            <person name="Wortman J.R."/>
            <person name="Kim H.S."/>
            <person name="Arroyo J."/>
            <person name="Berriman M."/>
            <person name="Abe K."/>
            <person name="Archer D.B."/>
            <person name="Bermejo C."/>
            <person name="Bennett J.W."/>
            <person name="Bowyer P."/>
            <person name="Chen D."/>
            <person name="Collins M."/>
            <person name="Coulsen R."/>
            <person name="Davies R."/>
            <person name="Dyer P.S."/>
            <person name="Farman M.L."/>
            <person name="Fedorova N."/>
            <person name="Fedorova N.D."/>
            <person name="Feldblyum T.V."/>
            <person name="Fischer R."/>
            <person name="Fosker N."/>
            <person name="Fraser A."/>
            <person name="Garcia J.L."/>
            <person name="Garcia M.J."/>
            <person name="Goble A."/>
            <person name="Goldman G.H."/>
            <person name="Gomi K."/>
            <person name="Griffith-Jones S."/>
            <person name="Gwilliam R."/>
            <person name="Haas B.J."/>
            <person name="Haas H."/>
            <person name="Harris D.E."/>
            <person name="Horiuchi H."/>
            <person name="Huang J."/>
            <person name="Humphray S."/>
            <person name="Jimenez J."/>
            <person name="Keller N."/>
            <person name="Khouri H."/>
            <person name="Kitamoto K."/>
            <person name="Kobayashi T."/>
            <person name="Konzack S."/>
            <person name="Kulkarni R."/>
            <person name="Kumagai T."/>
            <person name="Lafton A."/>
            <person name="Latge J.-P."/>
            <person name="Li W."/>
            <person name="Lord A."/>
            <person name="Lu C."/>
            <person name="Majoros W.H."/>
            <person name="May G.S."/>
            <person name="Miller B.L."/>
            <person name="Mohamoud Y."/>
            <person name="Molina M."/>
            <person name="Monod M."/>
            <person name="Mouyna I."/>
            <person name="Mulligan S."/>
            <person name="Murphy L.D."/>
            <person name="O'Neil S."/>
            <person name="Paulsen I."/>
            <person name="Penalva M.A."/>
            <person name="Pertea M."/>
            <person name="Price C."/>
            <person name="Pritchard B.L."/>
            <person name="Quail M.A."/>
            <person name="Rabbinowitsch E."/>
            <person name="Rawlins N."/>
            <person name="Rajandream M.A."/>
            <person name="Reichard U."/>
            <person name="Renauld H."/>
            <person name="Robson G.D."/>
            <person name="Rodriguez de Cordoba S."/>
            <person name="Rodriguez-Pena J.M."/>
            <person name="Ronning C.M."/>
            <person name="Rutter S."/>
            <person name="Salzberg S.L."/>
            <person name="Sanchez M."/>
            <person name="Sanchez-Ferrero J.C."/>
            <person name="Saunders D."/>
            <person name="Seeger K."/>
            <person name="Squares R."/>
            <person name="Squares S."/>
            <person name="Takeuchi M."/>
            <person name="Tekaia F."/>
            <person name="Turner G."/>
            <person name="Vazquez de Aldana C.R."/>
            <person name="Weidman J."/>
            <person name="White O."/>
            <person name="Woodward J.R."/>
            <person name="Yu J.-H."/>
            <person name="Fraser C.M."/>
            <person name="Galagan J.E."/>
            <person name="Asai K."/>
            <person name="Machida M."/>
            <person name="Hall N."/>
            <person name="Barrell B.G."/>
            <person name="Denning D.W."/>
        </authorList>
    </citation>
    <scope>NUCLEOTIDE SEQUENCE [LARGE SCALE GENOMIC DNA]</scope>
    <source>
        <strain>ATCC MYA-4609 / CBS 101355 / FGSC A1100 / Af293</strain>
    </source>
</reference>
<reference key="2">
    <citation type="journal article" date="2006" name="Curr. Genet.">
        <title>Transcriptome analysis of Aspergillus fumigatus exposed to voriconazole.</title>
        <authorList>
            <person name="da Silva Ferreira M.E."/>
            <person name="Malavazi I."/>
            <person name="Savoldi M."/>
            <person name="Brakhage A.A."/>
            <person name="Goldman M.H."/>
            <person name="Kim H.S."/>
            <person name="Nierman W.C."/>
            <person name="Goldman G.H."/>
        </authorList>
    </citation>
    <scope>IDENTIFICATION</scope>
    <scope>INDUCTION</scope>
    <scope>FUNCTION</scope>
</reference>
<name>ABCB_ASPFU</name>
<protein>
    <recommendedName>
        <fullName>ABC multidrug transporter B</fullName>
    </recommendedName>
</protein>
<comment type="function">
    <text evidence="8">Pleiotropic ABC efflux transporter that may be involved in A.fumigatus adaptation to azoles such as vorizonazole.</text>
</comment>
<comment type="subcellular location">
    <subcellularLocation>
        <location evidence="7">Cell membrane</location>
        <topology evidence="1">Multi-pass membrane protein</topology>
    </subcellularLocation>
</comment>
<comment type="induction">
    <text evidence="5">Expression is induced upon voriconazole treatment.</text>
</comment>
<comment type="similarity">
    <text evidence="7">Belongs to the ABC transporter superfamily. ABCC family. Conjugate transporter (TC 3.A.1.208) subfamily.</text>
</comment>
<dbReference type="EMBL" id="AAHF01000004">
    <property type="protein sequence ID" value="EAL90367.2"/>
    <property type="molecule type" value="Genomic_DNA"/>
</dbReference>
<dbReference type="RefSeq" id="XP_752405.2">
    <property type="nucleotide sequence ID" value="XM_747312.2"/>
</dbReference>
<dbReference type="SMR" id="Q4WT65"/>
<dbReference type="STRING" id="330879.Q4WT65"/>
<dbReference type="GlyCosmos" id="Q4WT65">
    <property type="glycosylation" value="7 sites, No reported glycans"/>
</dbReference>
<dbReference type="EnsemblFungi" id="EAL90367">
    <property type="protein sequence ID" value="EAL90367"/>
    <property type="gene ID" value="AFUA_1G10390"/>
</dbReference>
<dbReference type="GeneID" id="3510660"/>
<dbReference type="KEGG" id="afm:AFUA_1G10390"/>
<dbReference type="eggNOG" id="KOG0054">
    <property type="taxonomic scope" value="Eukaryota"/>
</dbReference>
<dbReference type="HOGENOM" id="CLU_000604_27_5_1"/>
<dbReference type="InParanoid" id="Q4WT65"/>
<dbReference type="OMA" id="CWQMIIT"/>
<dbReference type="OrthoDB" id="6500128at2759"/>
<dbReference type="Proteomes" id="UP000002530">
    <property type="component" value="Chromosome 1"/>
</dbReference>
<dbReference type="GO" id="GO:0000324">
    <property type="term" value="C:fungal-type vacuole"/>
    <property type="evidence" value="ECO:0000318"/>
    <property type="project" value="GO_Central"/>
</dbReference>
<dbReference type="GO" id="GO:0016020">
    <property type="term" value="C:membrane"/>
    <property type="evidence" value="ECO:0000318"/>
    <property type="project" value="GO_Central"/>
</dbReference>
<dbReference type="GO" id="GO:0005886">
    <property type="term" value="C:plasma membrane"/>
    <property type="evidence" value="ECO:0007669"/>
    <property type="project" value="UniProtKB-SubCell"/>
</dbReference>
<dbReference type="GO" id="GO:0140359">
    <property type="term" value="F:ABC-type transporter activity"/>
    <property type="evidence" value="ECO:0007669"/>
    <property type="project" value="InterPro"/>
</dbReference>
<dbReference type="GO" id="GO:0005524">
    <property type="term" value="F:ATP binding"/>
    <property type="evidence" value="ECO:0007669"/>
    <property type="project" value="UniProtKB-KW"/>
</dbReference>
<dbReference type="GO" id="GO:0016887">
    <property type="term" value="F:ATP hydrolysis activity"/>
    <property type="evidence" value="ECO:0007669"/>
    <property type="project" value="InterPro"/>
</dbReference>
<dbReference type="GO" id="GO:0042626">
    <property type="term" value="F:ATPase-coupled transmembrane transporter activity"/>
    <property type="evidence" value="ECO:0000318"/>
    <property type="project" value="GO_Central"/>
</dbReference>
<dbReference type="GO" id="GO:0055085">
    <property type="term" value="P:transmembrane transport"/>
    <property type="evidence" value="ECO:0000318"/>
    <property type="project" value="GO_Central"/>
</dbReference>
<dbReference type="CDD" id="cd18579">
    <property type="entry name" value="ABC_6TM_ABCC_D1"/>
    <property type="match status" value="1"/>
</dbReference>
<dbReference type="CDD" id="cd18580">
    <property type="entry name" value="ABC_6TM_ABCC_D2"/>
    <property type="match status" value="1"/>
</dbReference>
<dbReference type="CDD" id="cd03250">
    <property type="entry name" value="ABCC_MRP_domain1"/>
    <property type="match status" value="1"/>
</dbReference>
<dbReference type="CDD" id="cd03244">
    <property type="entry name" value="ABCC_MRP_domain2"/>
    <property type="match status" value="1"/>
</dbReference>
<dbReference type="FunFam" id="1.20.1560.10:FF:000055">
    <property type="entry name" value="ABC multidrug transporter (Eurofung)"/>
    <property type="match status" value="1"/>
</dbReference>
<dbReference type="FunFam" id="1.20.1560.10:FF:000066">
    <property type="entry name" value="ABC multidrug transporter (Eurofung)"/>
    <property type="match status" value="1"/>
</dbReference>
<dbReference type="FunFam" id="3.40.50.300:FF:000838">
    <property type="entry name" value="ABC multidrug transporter (Eurofung)"/>
    <property type="match status" value="1"/>
</dbReference>
<dbReference type="FunFam" id="3.40.50.300:FF:001854">
    <property type="entry name" value="ABC multidrug transporter (Eurofung)"/>
    <property type="match status" value="1"/>
</dbReference>
<dbReference type="Gene3D" id="1.20.1560.10">
    <property type="entry name" value="ABC transporter type 1, transmembrane domain"/>
    <property type="match status" value="2"/>
</dbReference>
<dbReference type="Gene3D" id="3.40.50.300">
    <property type="entry name" value="P-loop containing nucleotide triphosphate hydrolases"/>
    <property type="match status" value="2"/>
</dbReference>
<dbReference type="InterPro" id="IPR003593">
    <property type="entry name" value="AAA+_ATPase"/>
</dbReference>
<dbReference type="InterPro" id="IPR011527">
    <property type="entry name" value="ABC1_TM_dom"/>
</dbReference>
<dbReference type="InterPro" id="IPR036640">
    <property type="entry name" value="ABC1_TM_sf"/>
</dbReference>
<dbReference type="InterPro" id="IPR003439">
    <property type="entry name" value="ABC_transporter-like_ATP-bd"/>
</dbReference>
<dbReference type="InterPro" id="IPR017871">
    <property type="entry name" value="ABC_transporter-like_CS"/>
</dbReference>
<dbReference type="InterPro" id="IPR050173">
    <property type="entry name" value="ABC_transporter_C-like"/>
</dbReference>
<dbReference type="InterPro" id="IPR044746">
    <property type="entry name" value="ABCC_6TM_D1"/>
</dbReference>
<dbReference type="InterPro" id="IPR044726">
    <property type="entry name" value="ABCC_6TM_D2"/>
</dbReference>
<dbReference type="InterPro" id="IPR027417">
    <property type="entry name" value="P-loop_NTPase"/>
</dbReference>
<dbReference type="InterPro" id="IPR056227">
    <property type="entry name" value="TMD0_ABC"/>
</dbReference>
<dbReference type="PANTHER" id="PTHR24223:SF269">
    <property type="entry name" value="ABC MULTIDRUG TRANSPORTER (EUROFUNG)-RELATED"/>
    <property type="match status" value="1"/>
</dbReference>
<dbReference type="PANTHER" id="PTHR24223">
    <property type="entry name" value="ATP-BINDING CASSETTE SUB-FAMILY C"/>
    <property type="match status" value="1"/>
</dbReference>
<dbReference type="Pfam" id="PF00664">
    <property type="entry name" value="ABC_membrane"/>
    <property type="match status" value="1"/>
</dbReference>
<dbReference type="Pfam" id="PF00005">
    <property type="entry name" value="ABC_tran"/>
    <property type="match status" value="2"/>
</dbReference>
<dbReference type="Pfam" id="PF24357">
    <property type="entry name" value="TMD0_ABC"/>
    <property type="match status" value="1"/>
</dbReference>
<dbReference type="SMART" id="SM00382">
    <property type="entry name" value="AAA"/>
    <property type="match status" value="2"/>
</dbReference>
<dbReference type="SUPFAM" id="SSF90123">
    <property type="entry name" value="ABC transporter transmembrane region"/>
    <property type="match status" value="2"/>
</dbReference>
<dbReference type="SUPFAM" id="SSF52540">
    <property type="entry name" value="P-loop containing nucleoside triphosphate hydrolases"/>
    <property type="match status" value="2"/>
</dbReference>
<dbReference type="PROSITE" id="PS50929">
    <property type="entry name" value="ABC_TM1F"/>
    <property type="match status" value="2"/>
</dbReference>
<dbReference type="PROSITE" id="PS00211">
    <property type="entry name" value="ABC_TRANSPORTER_1"/>
    <property type="match status" value="2"/>
</dbReference>
<dbReference type="PROSITE" id="PS50893">
    <property type="entry name" value="ABC_TRANSPORTER_2"/>
    <property type="match status" value="2"/>
</dbReference>